<keyword id="KW-0119">Carbohydrate metabolism</keyword>
<keyword id="KW-0210">Decarboxylase</keyword>
<keyword id="KW-0456">Lyase</keyword>
<keyword id="KW-0460">Magnesium</keyword>
<keyword id="KW-0479">Metal-binding</keyword>
<proteinExistence type="inferred from homology"/>
<gene>
    <name evidence="1" type="primary">ulaD</name>
    <name type="ordered locus">SeHA_C4804</name>
</gene>
<dbReference type="EC" id="4.1.1.85" evidence="1"/>
<dbReference type="EMBL" id="CP001120">
    <property type="protein sequence ID" value="ACF68263.1"/>
    <property type="molecule type" value="Genomic_DNA"/>
</dbReference>
<dbReference type="RefSeq" id="WP_000056761.1">
    <property type="nucleotide sequence ID" value="NC_011083.1"/>
</dbReference>
<dbReference type="SMR" id="B4TFD0"/>
<dbReference type="KEGG" id="seh:SeHA_C4804"/>
<dbReference type="HOGENOM" id="CLU_081825_0_0_6"/>
<dbReference type="UniPathway" id="UPA00263">
    <property type="reaction ID" value="UER00378"/>
</dbReference>
<dbReference type="Proteomes" id="UP000001866">
    <property type="component" value="Chromosome"/>
</dbReference>
<dbReference type="GO" id="GO:0033982">
    <property type="term" value="F:3-dehydro-L-gulonate-6-phosphate decarboxylase activity"/>
    <property type="evidence" value="ECO:0007669"/>
    <property type="project" value="UniProtKB-EC"/>
</dbReference>
<dbReference type="GO" id="GO:0000287">
    <property type="term" value="F:magnesium ion binding"/>
    <property type="evidence" value="ECO:0007669"/>
    <property type="project" value="UniProtKB-UniRule"/>
</dbReference>
<dbReference type="GO" id="GO:0004590">
    <property type="term" value="F:orotidine-5'-phosphate decarboxylase activity"/>
    <property type="evidence" value="ECO:0007669"/>
    <property type="project" value="InterPro"/>
</dbReference>
<dbReference type="GO" id="GO:0006207">
    <property type="term" value="P:'de novo' pyrimidine nucleobase biosynthetic process"/>
    <property type="evidence" value="ECO:0007669"/>
    <property type="project" value="InterPro"/>
</dbReference>
<dbReference type="GO" id="GO:0019854">
    <property type="term" value="P:L-ascorbic acid catabolic process"/>
    <property type="evidence" value="ECO:0007669"/>
    <property type="project" value="UniProtKB-UniRule"/>
</dbReference>
<dbReference type="CDD" id="cd04726">
    <property type="entry name" value="KGPDC_HPS"/>
    <property type="match status" value="1"/>
</dbReference>
<dbReference type="FunFam" id="3.20.20.70:FF:000022">
    <property type="entry name" value="3-keto-L-gulonate-6-phosphate decarboxylase UlaD"/>
    <property type="match status" value="1"/>
</dbReference>
<dbReference type="Gene3D" id="3.20.20.70">
    <property type="entry name" value="Aldolase class I"/>
    <property type="match status" value="1"/>
</dbReference>
<dbReference type="HAMAP" id="MF_01267">
    <property type="entry name" value="UlaD"/>
    <property type="match status" value="1"/>
</dbReference>
<dbReference type="InterPro" id="IPR023942">
    <property type="entry name" value="3-keto-L-gulonate6Pdecase_UlaD"/>
</dbReference>
<dbReference type="InterPro" id="IPR013785">
    <property type="entry name" value="Aldolase_TIM"/>
</dbReference>
<dbReference type="InterPro" id="IPR041710">
    <property type="entry name" value="HPS/KGPDC"/>
</dbReference>
<dbReference type="InterPro" id="IPR001754">
    <property type="entry name" value="OMPdeCOase_dom"/>
</dbReference>
<dbReference type="InterPro" id="IPR011060">
    <property type="entry name" value="RibuloseP-bd_barrel"/>
</dbReference>
<dbReference type="NCBIfam" id="NF009832">
    <property type="entry name" value="PRK13306.1"/>
    <property type="match status" value="1"/>
</dbReference>
<dbReference type="PANTHER" id="PTHR35039">
    <property type="entry name" value="3-KETO-L-GULONATE-6-PHOSPHATE DECARBOXYLASE SGBH-RELATED"/>
    <property type="match status" value="1"/>
</dbReference>
<dbReference type="PANTHER" id="PTHR35039:SF3">
    <property type="entry name" value="3-KETO-L-GULONATE-6-PHOSPHATE DECARBOXYLASE SGBH-RELATED"/>
    <property type="match status" value="1"/>
</dbReference>
<dbReference type="Pfam" id="PF00215">
    <property type="entry name" value="OMPdecase"/>
    <property type="match status" value="1"/>
</dbReference>
<dbReference type="SMART" id="SM00934">
    <property type="entry name" value="OMPdecase"/>
    <property type="match status" value="1"/>
</dbReference>
<dbReference type="SUPFAM" id="SSF51366">
    <property type="entry name" value="Ribulose-phoshate binding barrel"/>
    <property type="match status" value="1"/>
</dbReference>
<accession>B4TFD0</accession>
<name>ULAD_SALHS</name>
<protein>
    <recommendedName>
        <fullName evidence="1">3-keto-L-gulonate-6-phosphate decarboxylase UlaD</fullName>
        <ecNumber evidence="1">4.1.1.85</ecNumber>
    </recommendedName>
    <alternativeName>
        <fullName evidence="1">3-dehydro-L-gulonate-6-phosphate decarboxylase</fullName>
    </alternativeName>
    <alternativeName>
        <fullName evidence="1">KGPDC</fullName>
    </alternativeName>
    <alternativeName>
        <fullName evidence="1">L-ascorbate utilization protein D</fullName>
    </alternativeName>
</protein>
<reference key="1">
    <citation type="journal article" date="2011" name="J. Bacteriol.">
        <title>Comparative genomics of 28 Salmonella enterica isolates: evidence for CRISPR-mediated adaptive sublineage evolution.</title>
        <authorList>
            <person name="Fricke W.F."/>
            <person name="Mammel M.K."/>
            <person name="McDermott P.F."/>
            <person name="Tartera C."/>
            <person name="White D.G."/>
            <person name="Leclerc J.E."/>
            <person name="Ravel J."/>
            <person name="Cebula T.A."/>
        </authorList>
    </citation>
    <scope>NUCLEOTIDE SEQUENCE [LARGE SCALE GENOMIC DNA]</scope>
    <source>
        <strain>SL476</strain>
    </source>
</reference>
<feature type="chain" id="PRO_1000140122" description="3-keto-L-gulonate-6-phosphate decarboxylase UlaD">
    <location>
        <begin position="1"/>
        <end position="216"/>
    </location>
</feature>
<feature type="binding site" evidence="1">
    <location>
        <position position="11"/>
    </location>
    <ligand>
        <name>substrate</name>
    </ligand>
</feature>
<feature type="binding site" evidence="1">
    <location>
        <position position="33"/>
    </location>
    <ligand>
        <name>Mg(2+)</name>
        <dbReference type="ChEBI" id="CHEBI:18420"/>
    </ligand>
</feature>
<feature type="binding site" evidence="1">
    <location>
        <position position="62"/>
    </location>
    <ligand>
        <name>Mg(2+)</name>
        <dbReference type="ChEBI" id="CHEBI:18420"/>
    </ligand>
</feature>
<feature type="binding site" evidence="1">
    <location>
        <position position="192"/>
    </location>
    <ligand>
        <name>substrate</name>
    </ligand>
</feature>
<feature type="site" description="Transition state stabilizer" evidence="1">
    <location>
        <position position="64"/>
    </location>
</feature>
<feature type="site" description="Transition state stabilizer" evidence="1">
    <location>
        <position position="67"/>
    </location>
</feature>
<comment type="function">
    <text evidence="1">Catalyzes the decarboxylation of 3-keto-L-gulonate-6-P into L-xylulose-5-P. Is involved in the anaerobic L-ascorbate utilization.</text>
</comment>
<comment type="catalytic activity">
    <reaction evidence="1">
        <text>3-dehydro-L-gulonate 6-phosphate + H(+) = L-xylulose 5-phosphate + CO2</text>
        <dbReference type="Rhea" id="RHEA:14353"/>
        <dbReference type="ChEBI" id="CHEBI:15378"/>
        <dbReference type="ChEBI" id="CHEBI:16526"/>
        <dbReference type="ChEBI" id="CHEBI:57829"/>
        <dbReference type="ChEBI" id="CHEBI:58774"/>
        <dbReference type="EC" id="4.1.1.85"/>
    </reaction>
</comment>
<comment type="cofactor">
    <cofactor evidence="1">
        <name>Mg(2+)</name>
        <dbReference type="ChEBI" id="CHEBI:18420"/>
    </cofactor>
    <text evidence="1">Binds 1 Mg(2+) ion per subunit.</text>
</comment>
<comment type="pathway">
    <text evidence="1">Cofactor degradation; L-ascorbate degradation; D-xylulose 5-phosphate from L-ascorbate: step 2/4.</text>
</comment>
<comment type="subunit">
    <text evidence="1">Homodimer.</text>
</comment>
<comment type="induction">
    <text evidence="1">Induced by L-ascorbate. Repressed by UlaR.</text>
</comment>
<comment type="similarity">
    <text evidence="1">Belongs to the HPS/KGPDC family. KGPDC subfamily.</text>
</comment>
<organism>
    <name type="scientific">Salmonella heidelberg (strain SL476)</name>
    <dbReference type="NCBI Taxonomy" id="454169"/>
    <lineage>
        <taxon>Bacteria</taxon>
        <taxon>Pseudomonadati</taxon>
        <taxon>Pseudomonadota</taxon>
        <taxon>Gammaproteobacteria</taxon>
        <taxon>Enterobacterales</taxon>
        <taxon>Enterobacteriaceae</taxon>
        <taxon>Salmonella</taxon>
    </lineage>
</organism>
<sequence>MSLPMLQVALDNQTMDSAYETTRLIAEEVDIIEVGTILCVGEGVRAVRDLKALYPHKIVLADAKIADAGKILSRMCFEANADWVTVICCADINTAKGALDVAKEFNGDVQIELTGYWTWEQAQQWRDAGIQQVVYHRSRDAQAAGVAWGEADITAIKRLSDMGFKVTVTGGLALEDLPLFKGIPIHVFIAGRSIRDAESPVEAARQFKRSIAQLWG</sequence>
<evidence type="ECO:0000255" key="1">
    <source>
        <dbReference type="HAMAP-Rule" id="MF_01267"/>
    </source>
</evidence>